<evidence type="ECO:0000255" key="1">
    <source>
        <dbReference type="HAMAP-Rule" id="MF_03189"/>
    </source>
</evidence>
<evidence type="ECO:0000305" key="2"/>
<evidence type="ECO:0000312" key="3">
    <source>
        <dbReference type="EMBL" id="EAL27989.1"/>
    </source>
</evidence>
<feature type="transit peptide" description="Mitochondrion" evidence="1">
    <location>
        <begin position="1"/>
        <end position="14"/>
    </location>
</feature>
<feature type="chain" id="PRO_0000307703" description="4-hydroxybenzoate polyprenyltransferase, mitochondrial" evidence="1">
    <location>
        <begin position="15"/>
        <end position="397"/>
    </location>
</feature>
<feature type="transmembrane region" description="Helical" evidence="1">
    <location>
        <begin position="96"/>
        <end position="116"/>
    </location>
</feature>
<feature type="transmembrane region" description="Helical" evidence="1">
    <location>
        <begin position="121"/>
        <end position="141"/>
    </location>
</feature>
<feature type="transmembrane region" description="Helical" evidence="1">
    <location>
        <begin position="169"/>
        <end position="189"/>
    </location>
</feature>
<feature type="transmembrane region" description="Helical" evidence="1">
    <location>
        <begin position="190"/>
        <end position="210"/>
    </location>
</feature>
<feature type="transmembrane region" description="Helical" evidence="1">
    <location>
        <begin position="213"/>
        <end position="233"/>
    </location>
</feature>
<feature type="transmembrane region" description="Helical" evidence="1">
    <location>
        <begin position="242"/>
        <end position="262"/>
    </location>
</feature>
<feature type="transmembrane region" description="Helical" evidence="1">
    <location>
        <begin position="289"/>
        <end position="309"/>
    </location>
</feature>
<feature type="transmembrane region" description="Helical" evidence="1">
    <location>
        <begin position="313"/>
        <end position="333"/>
    </location>
</feature>
<feature type="transmembrane region" description="Helical" evidence="1">
    <location>
        <begin position="345"/>
        <end position="365"/>
    </location>
</feature>
<organism>
    <name type="scientific">Drosophila pseudoobscura pseudoobscura</name>
    <name type="common">Fruit fly</name>
    <dbReference type="NCBI Taxonomy" id="46245"/>
    <lineage>
        <taxon>Eukaryota</taxon>
        <taxon>Metazoa</taxon>
        <taxon>Ecdysozoa</taxon>
        <taxon>Arthropoda</taxon>
        <taxon>Hexapoda</taxon>
        <taxon>Insecta</taxon>
        <taxon>Pterygota</taxon>
        <taxon>Neoptera</taxon>
        <taxon>Endopterygota</taxon>
        <taxon>Diptera</taxon>
        <taxon>Brachycera</taxon>
        <taxon>Muscomorpha</taxon>
        <taxon>Ephydroidea</taxon>
        <taxon>Drosophilidae</taxon>
        <taxon>Drosophila</taxon>
        <taxon>Sophophora</taxon>
    </lineage>
</organism>
<protein>
    <recommendedName>
        <fullName evidence="1">4-hydroxybenzoate polyprenyltransferase, mitochondrial</fullName>
        <shortName evidence="1">4-HB polyprenyltransferase</shortName>
        <ecNumber evidence="1">2.5.1.39</ecNumber>
    </recommendedName>
    <alternativeName>
        <fullName>Coenzyme Q biosynthesis protein 2</fullName>
    </alternativeName>
    <alternativeName>
        <fullName evidence="1">Para-hydroxybenzoate--polyprenyltransferase</fullName>
        <shortName evidence="1">PHB:PPT</shortName>
        <shortName evidence="1">PHB:polyprenyltransferase</shortName>
    </alternativeName>
</protein>
<reference evidence="3" key="1">
    <citation type="journal article" date="2005" name="Genome Res.">
        <title>Comparative genome sequencing of Drosophila pseudoobscura: chromosomal, gene, and cis-element evolution.</title>
        <authorList>
            <person name="Richards S."/>
            <person name="Liu Y."/>
            <person name="Bettencourt B.R."/>
            <person name="Hradecky P."/>
            <person name="Letovsky S."/>
            <person name="Nielsen R."/>
            <person name="Thornton K."/>
            <person name="Hubisz M.J."/>
            <person name="Chen R."/>
            <person name="Meisel R.P."/>
            <person name="Couronne O."/>
            <person name="Hua S."/>
            <person name="Smith M.A."/>
            <person name="Zhang P."/>
            <person name="Liu J."/>
            <person name="Bussemaker H.J."/>
            <person name="van Batenburg M.F."/>
            <person name="Howells S.L."/>
            <person name="Scherer S.E."/>
            <person name="Sodergren E."/>
            <person name="Matthews B.B."/>
            <person name="Crosby M.A."/>
            <person name="Schroeder A.J."/>
            <person name="Ortiz-Barrientos D."/>
            <person name="Rives C.M."/>
            <person name="Metzker M.L."/>
            <person name="Muzny D.M."/>
            <person name="Scott G."/>
            <person name="Steffen D."/>
            <person name="Wheeler D.A."/>
            <person name="Worley K.C."/>
            <person name="Havlak P."/>
            <person name="Durbin K.J."/>
            <person name="Egan A."/>
            <person name="Gill R."/>
            <person name="Hume J."/>
            <person name="Morgan M.B."/>
            <person name="Miner G."/>
            <person name="Hamilton C."/>
            <person name="Huang Y."/>
            <person name="Waldron L."/>
            <person name="Verduzco D."/>
            <person name="Clerc-Blankenburg K.P."/>
            <person name="Dubchak I."/>
            <person name="Noor M.A.F."/>
            <person name="Anderson W."/>
            <person name="White K.P."/>
            <person name="Clark A.G."/>
            <person name="Schaeffer S.W."/>
            <person name="Gelbart W.M."/>
            <person name="Weinstock G.M."/>
            <person name="Gibbs R.A."/>
        </authorList>
    </citation>
    <scope>NUCLEOTIDE SEQUENCE [LARGE SCALE GENOMIC DNA]</scope>
    <source>
        <strain>MV2-25 / Tucson 14011-0121.94</strain>
    </source>
</reference>
<gene>
    <name evidence="1" type="primary">Coq2</name>
    <name type="ORF">GA21912</name>
</gene>
<dbReference type="EC" id="2.5.1.39" evidence="1"/>
<dbReference type="EMBL" id="CM000070">
    <property type="protein sequence ID" value="EAL27989.1"/>
    <property type="status" value="ALT_SEQ"/>
    <property type="molecule type" value="Genomic_DNA"/>
</dbReference>
<dbReference type="RefSeq" id="XP_001358846.1">
    <property type="nucleotide sequence ID" value="XM_001358809.3"/>
</dbReference>
<dbReference type="RefSeq" id="XP_015037401.1">
    <property type="nucleotide sequence ID" value="XM_015181915.1"/>
</dbReference>
<dbReference type="SMR" id="Q298G6"/>
<dbReference type="FunCoup" id="Q298G6">
    <property type="interactions" value="910"/>
</dbReference>
<dbReference type="STRING" id="46245.Q298G6"/>
<dbReference type="EnsemblMetazoa" id="FBtr0283533">
    <property type="protein sequence ID" value="FBpp0281971"/>
    <property type="gene ID" value="FBgn0081897"/>
</dbReference>
<dbReference type="EnsemblMetazoa" id="FBtr0370374">
    <property type="protein sequence ID" value="FBpp0332769"/>
    <property type="gene ID" value="FBgn0081897"/>
</dbReference>
<dbReference type="GeneID" id="4801812"/>
<dbReference type="KEGG" id="dpo:4801812"/>
<dbReference type="CTD" id="27235"/>
<dbReference type="eggNOG" id="KOG1381">
    <property type="taxonomic scope" value="Eukaryota"/>
</dbReference>
<dbReference type="HOGENOM" id="CLU_034879_3_1_1"/>
<dbReference type="InParanoid" id="Q298G6"/>
<dbReference type="OMA" id="KFEHTIF"/>
<dbReference type="PhylomeDB" id="Q298G6"/>
<dbReference type="UniPathway" id="UPA00232"/>
<dbReference type="Proteomes" id="UP000001819">
    <property type="component" value="Chromosome 2"/>
</dbReference>
<dbReference type="Bgee" id="FBgn0081897">
    <property type="expression patterns" value="Expressed in female reproductive system and 2 other cell types or tissues"/>
</dbReference>
<dbReference type="GO" id="GO:0005743">
    <property type="term" value="C:mitochondrial inner membrane"/>
    <property type="evidence" value="ECO:0000250"/>
    <property type="project" value="UniProtKB"/>
</dbReference>
<dbReference type="GO" id="GO:0005739">
    <property type="term" value="C:mitochondrion"/>
    <property type="evidence" value="ECO:0000250"/>
    <property type="project" value="UniProtKB"/>
</dbReference>
<dbReference type="GO" id="GO:0005666">
    <property type="term" value="C:RNA polymerase III complex"/>
    <property type="evidence" value="ECO:0000250"/>
    <property type="project" value="UniProtKB"/>
</dbReference>
<dbReference type="GO" id="GO:0008412">
    <property type="term" value="F:4-hydroxybenzoate polyprenyltransferase activity"/>
    <property type="evidence" value="ECO:0000250"/>
    <property type="project" value="UniProtKB"/>
</dbReference>
<dbReference type="GO" id="GO:0008299">
    <property type="term" value="P:isoprenoid biosynthetic process"/>
    <property type="evidence" value="ECO:0007669"/>
    <property type="project" value="UniProtKB-UniRule"/>
</dbReference>
<dbReference type="GO" id="GO:0006383">
    <property type="term" value="P:transcription by RNA polymerase III"/>
    <property type="evidence" value="ECO:0000250"/>
    <property type="project" value="UniProtKB"/>
</dbReference>
<dbReference type="GO" id="GO:0006744">
    <property type="term" value="P:ubiquinone biosynthetic process"/>
    <property type="evidence" value="ECO:0000250"/>
    <property type="project" value="UniProtKB"/>
</dbReference>
<dbReference type="CDD" id="cd13959">
    <property type="entry name" value="PT_UbiA_COQ2"/>
    <property type="match status" value="1"/>
</dbReference>
<dbReference type="FunFam" id="1.20.120.1780:FF:000001">
    <property type="entry name" value="4-hydroxybenzoate octaprenyltransferase"/>
    <property type="match status" value="1"/>
</dbReference>
<dbReference type="FunFam" id="1.10.357.140:FF:000003">
    <property type="entry name" value="4-hydroxybenzoate polyprenyltransferase, mitochondrial"/>
    <property type="match status" value="1"/>
</dbReference>
<dbReference type="Gene3D" id="1.10.357.140">
    <property type="entry name" value="UbiA prenyltransferase"/>
    <property type="match status" value="1"/>
</dbReference>
<dbReference type="Gene3D" id="1.20.120.1780">
    <property type="entry name" value="UbiA prenyltransferase"/>
    <property type="match status" value="1"/>
</dbReference>
<dbReference type="HAMAP" id="MF_01635">
    <property type="entry name" value="UbiA"/>
    <property type="match status" value="1"/>
</dbReference>
<dbReference type="InterPro" id="IPR006370">
    <property type="entry name" value="HB_polyprenyltransferase-like"/>
</dbReference>
<dbReference type="InterPro" id="IPR039653">
    <property type="entry name" value="Prenyltransferase"/>
</dbReference>
<dbReference type="InterPro" id="IPR000537">
    <property type="entry name" value="UbiA_prenyltransferase"/>
</dbReference>
<dbReference type="InterPro" id="IPR030470">
    <property type="entry name" value="UbiA_prenylTrfase_CS"/>
</dbReference>
<dbReference type="InterPro" id="IPR044878">
    <property type="entry name" value="UbiA_sf"/>
</dbReference>
<dbReference type="NCBIfam" id="TIGR01474">
    <property type="entry name" value="ubiA_proteo"/>
    <property type="match status" value="1"/>
</dbReference>
<dbReference type="PANTHER" id="PTHR11048:SF28">
    <property type="entry name" value="4-HYDROXYBENZOATE POLYPRENYLTRANSFERASE, MITOCHONDRIAL"/>
    <property type="match status" value="1"/>
</dbReference>
<dbReference type="PANTHER" id="PTHR11048">
    <property type="entry name" value="PRENYLTRANSFERASES"/>
    <property type="match status" value="1"/>
</dbReference>
<dbReference type="Pfam" id="PF01040">
    <property type="entry name" value="UbiA"/>
    <property type="match status" value="1"/>
</dbReference>
<dbReference type="PROSITE" id="PS00943">
    <property type="entry name" value="UBIA"/>
    <property type="match status" value="1"/>
</dbReference>
<comment type="function">
    <text evidence="1">Catalyzes the prenylation of para-hydroxybenzoate (PHB) with an all-trans polyprenyl group. Mediates the second step in the final reaction sequence of coenzyme Q (CoQ) biosynthesis, which is the condensation of the polyisoprenoid side chain with PHB, generating the first membrane-bound Q intermediate.</text>
</comment>
<comment type="catalytic activity">
    <reaction evidence="1">
        <text>an all-trans-polyprenyl diphosphate + 4-hydroxybenzoate = a 4-hydroxy-3-(all-trans-polyprenyl)benzoate + diphosphate</text>
        <dbReference type="Rhea" id="RHEA:44504"/>
        <dbReference type="Rhea" id="RHEA-COMP:9514"/>
        <dbReference type="Rhea" id="RHEA-COMP:9564"/>
        <dbReference type="ChEBI" id="CHEBI:17879"/>
        <dbReference type="ChEBI" id="CHEBI:33019"/>
        <dbReference type="ChEBI" id="CHEBI:58914"/>
        <dbReference type="ChEBI" id="CHEBI:78396"/>
        <dbReference type="EC" id="2.5.1.39"/>
    </reaction>
</comment>
<comment type="cofactor">
    <cofactor evidence="1">
        <name>Mg(2+)</name>
        <dbReference type="ChEBI" id="CHEBI:18420"/>
    </cofactor>
</comment>
<comment type="pathway">
    <text evidence="1">Cofactor biosynthesis; ubiquinone biosynthesis.</text>
</comment>
<comment type="subcellular location">
    <subcellularLocation>
        <location evidence="1">Mitochondrion inner membrane</location>
        <topology evidence="1">Multi-pass membrane protein</topology>
        <orientation evidence="1">Matrix side</orientation>
    </subcellularLocation>
</comment>
<comment type="similarity">
    <text evidence="1">Belongs to the UbiA prenyltransferase family.</text>
</comment>
<comment type="sequence caution" evidence="2">
    <conflict type="erroneous gene model prediction">
        <sequence resource="EMBL-CDS" id="EAL27989"/>
    </conflict>
</comment>
<proteinExistence type="inferred from homology"/>
<name>COQ2_DROPS</name>
<accession>Q298G6</accession>
<keyword id="KW-0414">Isoprene biosynthesis</keyword>
<keyword id="KW-0472">Membrane</keyword>
<keyword id="KW-0496">Mitochondrion</keyword>
<keyword id="KW-0999">Mitochondrion inner membrane</keyword>
<keyword id="KW-1185">Reference proteome</keyword>
<keyword id="KW-0808">Transferase</keyword>
<keyword id="KW-0809">Transit peptide</keyword>
<keyword id="KW-0812">Transmembrane</keyword>
<keyword id="KW-1133">Transmembrane helix</keyword>
<keyword id="KW-0831">Ubiquinone biosynthesis</keyword>
<sequence>MFAVRHLLKSRKHFPYAYAAATTTKSTLPMPAVPARVLIGLHTDSDCRNKRLPQIQELSFRKMSSLPTSKKPGSLLEELYAATKPYAQLMRIDRPIGTYLLFWPCAWSIALSADAGCWPDLTMLGLFGTGALIMRGAGCTINDLWDKDIDAKVERTRTRPLASGQISQFDAIVFLSAQLSLGLLVLVQLNWQSILLGASSLGLVITYPLMKRVTYWPQLVLGMAFNWGALLGWCATQGSVNLAACLPLYLSGVCWTIVYDTIYAHQDKLDDLQIGVKSTALRFGENTKVWLSGFTAAMLTGLSTAGWACDQTLPYYAAVGVVGAHLVQQIYSLNIDNPTDCAKKFLSNHQVGLILFLGIVLGTLLKANDTKNQPQPALTSSAASSYASLTQKPEVLS</sequence>